<keyword id="KW-0050">Antiport</keyword>
<keyword id="KW-0997">Cell inner membrane</keyword>
<keyword id="KW-1003">Cell membrane</keyword>
<keyword id="KW-0406">Ion transport</keyword>
<keyword id="KW-0472">Membrane</keyword>
<keyword id="KW-0915">Sodium</keyword>
<keyword id="KW-0739">Sodium transport</keyword>
<keyword id="KW-0812">Transmembrane</keyword>
<keyword id="KW-1133">Transmembrane helix</keyword>
<keyword id="KW-0813">Transport</keyword>
<dbReference type="EMBL" id="AE001439">
    <property type="protein sequence ID" value="AAD07026.1"/>
    <property type="molecule type" value="Genomic_DNA"/>
</dbReference>
<dbReference type="PIR" id="B71805">
    <property type="entry name" value="B71805"/>
</dbReference>
<dbReference type="RefSeq" id="WP_001049659.1">
    <property type="nucleotide sequence ID" value="NC_000921.1"/>
</dbReference>
<dbReference type="SMR" id="Q9ZJ68"/>
<dbReference type="KEGG" id="hpj:jhp_1447"/>
<dbReference type="PATRIC" id="fig|85963.30.peg.1096"/>
<dbReference type="eggNOG" id="COG3004">
    <property type="taxonomic scope" value="Bacteria"/>
</dbReference>
<dbReference type="Proteomes" id="UP000000804">
    <property type="component" value="Chromosome"/>
</dbReference>
<dbReference type="GO" id="GO:0005886">
    <property type="term" value="C:plasma membrane"/>
    <property type="evidence" value="ECO:0007669"/>
    <property type="project" value="UniProtKB-SubCell"/>
</dbReference>
<dbReference type="GO" id="GO:0015385">
    <property type="term" value="F:sodium:proton antiporter activity"/>
    <property type="evidence" value="ECO:0007669"/>
    <property type="project" value="TreeGrafter"/>
</dbReference>
<dbReference type="GO" id="GO:0006885">
    <property type="term" value="P:regulation of pH"/>
    <property type="evidence" value="ECO:0007669"/>
    <property type="project" value="InterPro"/>
</dbReference>
<dbReference type="Gene3D" id="1.20.1530.10">
    <property type="entry name" value="Na+/H+ antiporter like domain"/>
    <property type="match status" value="1"/>
</dbReference>
<dbReference type="HAMAP" id="MF_01844">
    <property type="entry name" value="NhaA"/>
    <property type="match status" value="1"/>
</dbReference>
<dbReference type="InterPro" id="IPR023171">
    <property type="entry name" value="Na/H_antiporter_dom_sf"/>
</dbReference>
<dbReference type="InterPro" id="IPR004670">
    <property type="entry name" value="NhaA"/>
</dbReference>
<dbReference type="NCBIfam" id="TIGR00773">
    <property type="entry name" value="NhaA"/>
    <property type="match status" value="1"/>
</dbReference>
<dbReference type="NCBIfam" id="NF011428">
    <property type="entry name" value="PRK14856.1"/>
    <property type="match status" value="1"/>
</dbReference>
<dbReference type="PANTHER" id="PTHR30341:SF0">
    <property type="entry name" value="NA(+)_H(+) ANTIPORTER NHAA"/>
    <property type="match status" value="1"/>
</dbReference>
<dbReference type="PANTHER" id="PTHR30341">
    <property type="entry name" value="SODIUM ION/PROTON ANTIPORTER NHAA-RELATED"/>
    <property type="match status" value="1"/>
</dbReference>
<dbReference type="Pfam" id="PF06965">
    <property type="entry name" value="Na_H_antiport_1"/>
    <property type="match status" value="1"/>
</dbReference>
<comment type="function">
    <text evidence="1">Na(+)/H(+) antiporter that extrudes sodium in exchange for external protons.</text>
</comment>
<comment type="catalytic activity">
    <reaction evidence="1">
        <text>Na(+)(in) + 2 H(+)(out) = Na(+)(out) + 2 H(+)(in)</text>
        <dbReference type="Rhea" id="RHEA:29251"/>
        <dbReference type="ChEBI" id="CHEBI:15378"/>
        <dbReference type="ChEBI" id="CHEBI:29101"/>
    </reaction>
    <physiologicalReaction direction="left-to-right" evidence="1">
        <dbReference type="Rhea" id="RHEA:29252"/>
    </physiologicalReaction>
</comment>
<comment type="subcellular location">
    <subcellularLocation>
        <location evidence="1">Cell inner membrane</location>
        <topology evidence="1">Multi-pass membrane protein</topology>
    </subcellularLocation>
</comment>
<comment type="similarity">
    <text evidence="1">Belongs to the NhaA Na(+)/H(+) (TC 2.A.33) antiporter family.</text>
</comment>
<feature type="chain" id="PRO_0000334322" description="Na(+)/H(+) antiporter NhaA">
    <location>
        <begin position="1"/>
        <end position="438"/>
    </location>
</feature>
<feature type="transmembrane region" description="Helical" evidence="1">
    <location>
        <begin position="23"/>
        <end position="43"/>
    </location>
</feature>
<feature type="transmembrane region" description="Helical" evidence="1">
    <location>
        <begin position="62"/>
        <end position="82"/>
    </location>
</feature>
<feature type="transmembrane region" description="Helical" evidence="1">
    <location>
        <begin position="104"/>
        <end position="124"/>
    </location>
</feature>
<feature type="transmembrane region" description="Helical" evidence="1">
    <location>
        <begin position="133"/>
        <end position="153"/>
    </location>
</feature>
<feature type="transmembrane region" description="Helical" evidence="1">
    <location>
        <begin position="162"/>
        <end position="182"/>
    </location>
</feature>
<feature type="transmembrane region" description="Helical" evidence="1">
    <location>
        <begin position="185"/>
        <end position="205"/>
    </location>
</feature>
<feature type="transmembrane region" description="Helical" evidence="1">
    <location>
        <begin position="212"/>
        <end position="232"/>
    </location>
</feature>
<feature type="transmembrane region" description="Helical" evidence="1">
    <location>
        <begin position="302"/>
        <end position="322"/>
    </location>
</feature>
<feature type="transmembrane region" description="Helical" evidence="1">
    <location>
        <begin position="337"/>
        <end position="357"/>
    </location>
</feature>
<feature type="transmembrane region" description="Helical" evidence="1">
    <location>
        <begin position="372"/>
        <end position="392"/>
    </location>
</feature>
<feature type="transmembrane region" description="Helical" evidence="1">
    <location>
        <begin position="410"/>
        <end position="430"/>
    </location>
</feature>
<evidence type="ECO:0000255" key="1">
    <source>
        <dbReference type="HAMAP-Rule" id="MF_01844"/>
    </source>
</evidence>
<sequence length="438" mass="47739">MNLKKTENALSLTLKNFIKSESFGGIFLFLNAVLAMVVANSFLKESYFALWHTPFGFQVGDFFIGFSLHNWIDDVLMALFFLMIGLEIKRELLFGELSSFKKASFPVIAAIGGMIAPGLIYFFLNANTPSQHGFGIPMATDIAFALGVIMLLGKRVPTALKVFLITLAVADDLGAIVVIALFYTTNLKFAWLLGALGVVLVLAILNRLNIRSLIPYLLLGVLLWFCVHQSGIHATIAAVVLAFMIPVKIPKDSKNVELLELGKRYAETSSGVLLTKEQQEILHSIEEKASALQSPLERLEHFLAPISGYFIMPLFAFANAGVSVDSSINLEVDKVLLGVILGLCLGKPLGIFLITFISEKLKITARPKGIGWWHILGAGLLAGIGFTMSMFISNLAFTSEHKDAMEVAKIAILLGSLISGIIGALYLFALDKRAALKK</sequence>
<organism>
    <name type="scientific">Helicobacter pylori (strain J99 / ATCC 700824)</name>
    <name type="common">Campylobacter pylori J99</name>
    <dbReference type="NCBI Taxonomy" id="85963"/>
    <lineage>
        <taxon>Bacteria</taxon>
        <taxon>Pseudomonadati</taxon>
        <taxon>Campylobacterota</taxon>
        <taxon>Epsilonproteobacteria</taxon>
        <taxon>Campylobacterales</taxon>
        <taxon>Helicobacteraceae</taxon>
        <taxon>Helicobacter</taxon>
    </lineage>
</organism>
<gene>
    <name evidence="1" type="primary">nhaA</name>
    <name type="ordered locus">jhp_1447</name>
</gene>
<reference key="1">
    <citation type="journal article" date="1999" name="Nature">
        <title>Genomic sequence comparison of two unrelated isolates of the human gastric pathogen Helicobacter pylori.</title>
        <authorList>
            <person name="Alm R.A."/>
            <person name="Ling L.-S.L."/>
            <person name="Moir D.T."/>
            <person name="King B.L."/>
            <person name="Brown E.D."/>
            <person name="Doig P.C."/>
            <person name="Smith D.R."/>
            <person name="Noonan B."/>
            <person name="Guild B.C."/>
            <person name="deJonge B.L."/>
            <person name="Carmel G."/>
            <person name="Tummino P.J."/>
            <person name="Caruso A."/>
            <person name="Uria-Nickelsen M."/>
            <person name="Mills D.M."/>
            <person name="Ives C."/>
            <person name="Gibson R."/>
            <person name="Merberg D."/>
            <person name="Mills S.D."/>
            <person name="Jiang Q."/>
            <person name="Taylor D.E."/>
            <person name="Vovis G.F."/>
            <person name="Trust T.J."/>
        </authorList>
    </citation>
    <scope>NUCLEOTIDE SEQUENCE [LARGE SCALE GENOMIC DNA]</scope>
    <source>
        <strain>J99 / ATCC 700824</strain>
    </source>
</reference>
<proteinExistence type="inferred from homology"/>
<protein>
    <recommendedName>
        <fullName evidence="1">Na(+)/H(+) antiporter NhaA</fullName>
    </recommendedName>
    <alternativeName>
        <fullName evidence="1">Sodium/proton antiporter NhaA</fullName>
    </alternativeName>
</protein>
<name>NHAA_HELPJ</name>
<accession>Q9ZJ68</accession>